<evidence type="ECO:0000255" key="1">
    <source>
        <dbReference type="HAMAP-Rule" id="MF_01454"/>
    </source>
</evidence>
<evidence type="ECO:0000255" key="2">
    <source>
        <dbReference type="PROSITE-ProRule" id="PRU01231"/>
    </source>
</evidence>
<proteinExistence type="inferred from homology"/>
<organism>
    <name type="scientific">Anaeromyxobacter dehalogenans (strain 2CP-1 / ATCC BAA-258)</name>
    <dbReference type="NCBI Taxonomy" id="455488"/>
    <lineage>
        <taxon>Bacteria</taxon>
        <taxon>Pseudomonadati</taxon>
        <taxon>Myxococcota</taxon>
        <taxon>Myxococcia</taxon>
        <taxon>Myxococcales</taxon>
        <taxon>Cystobacterineae</taxon>
        <taxon>Anaeromyxobacteraceae</taxon>
        <taxon>Anaeromyxobacter</taxon>
    </lineage>
</organism>
<sequence>MKFVDEVKIHVKAGDGGDGAVAWRREKFIPRGGPAGGDGGNGGDVVLEVDPQLSTLLDYRYIREHKARNGEKGSGSDMNGKDGADLVLRVPPGTVVKDAATGEQLCDLGAAGERVVIAKGGRGGLGNMNFASSTNQAPRYAEDGTPGAERDLVLELKLLADVGIVGYPNAGKSTLISRISRARPKIADYPFTTLTPNLGVVGWRERSFVVADIPGLIEGAHAGAGLGHQFLRHVERCRVLIHLVEGANPEPGRAPKPDLDAINAELAAYSDELARKPQIVAVTKIDVPEARAAGVKLQKLLGRRKKPVPVHLVSAVTGEGLDALLDAVGRALFKEARPHRGGGGKKLAKPRARA</sequence>
<reference key="1">
    <citation type="submission" date="2009-01" db="EMBL/GenBank/DDBJ databases">
        <title>Complete sequence of Anaeromyxobacter dehalogenans 2CP-1.</title>
        <authorList>
            <person name="Lucas S."/>
            <person name="Copeland A."/>
            <person name="Lapidus A."/>
            <person name="Glavina del Rio T."/>
            <person name="Dalin E."/>
            <person name="Tice H."/>
            <person name="Bruce D."/>
            <person name="Goodwin L."/>
            <person name="Pitluck S."/>
            <person name="Saunders E."/>
            <person name="Brettin T."/>
            <person name="Detter J.C."/>
            <person name="Han C."/>
            <person name="Larimer F."/>
            <person name="Land M."/>
            <person name="Hauser L."/>
            <person name="Kyrpides N."/>
            <person name="Ovchinnikova G."/>
            <person name="Beliaev A.S."/>
            <person name="Richardson P."/>
        </authorList>
    </citation>
    <scope>NUCLEOTIDE SEQUENCE [LARGE SCALE GENOMIC DNA]</scope>
    <source>
        <strain>2CP-1 / ATCC BAA-258</strain>
    </source>
</reference>
<accession>B8JBP2</accession>
<comment type="function">
    <text evidence="1">An essential GTPase which binds GTP, GDP and possibly (p)ppGpp with moderate affinity, with high nucleotide exchange rates and a fairly low GTP hydrolysis rate. Plays a role in control of the cell cycle, stress response, ribosome biogenesis and in those bacteria that undergo differentiation, in morphogenesis control.</text>
</comment>
<comment type="cofactor">
    <cofactor evidence="1">
        <name>Mg(2+)</name>
        <dbReference type="ChEBI" id="CHEBI:18420"/>
    </cofactor>
</comment>
<comment type="subunit">
    <text evidence="1">Monomer.</text>
</comment>
<comment type="subcellular location">
    <subcellularLocation>
        <location evidence="1">Cytoplasm</location>
    </subcellularLocation>
</comment>
<comment type="similarity">
    <text evidence="1">Belongs to the TRAFAC class OBG-HflX-like GTPase superfamily. OBG GTPase family.</text>
</comment>
<protein>
    <recommendedName>
        <fullName evidence="1">GTPase Obg</fullName>
        <ecNumber evidence="1">3.6.5.-</ecNumber>
    </recommendedName>
    <alternativeName>
        <fullName evidence="1">GTP-binding protein Obg</fullName>
    </alternativeName>
</protein>
<feature type="chain" id="PRO_0000385692" description="GTPase Obg">
    <location>
        <begin position="1"/>
        <end position="354"/>
    </location>
</feature>
<feature type="domain" description="Obg" evidence="2">
    <location>
        <begin position="1"/>
        <end position="159"/>
    </location>
</feature>
<feature type="domain" description="OBG-type G" evidence="1">
    <location>
        <begin position="160"/>
        <end position="333"/>
    </location>
</feature>
<feature type="binding site" evidence="1">
    <location>
        <begin position="166"/>
        <end position="173"/>
    </location>
    <ligand>
        <name>GTP</name>
        <dbReference type="ChEBI" id="CHEBI:37565"/>
    </ligand>
</feature>
<feature type="binding site" evidence="1">
    <location>
        <position position="173"/>
    </location>
    <ligand>
        <name>Mg(2+)</name>
        <dbReference type="ChEBI" id="CHEBI:18420"/>
    </ligand>
</feature>
<feature type="binding site" evidence="1">
    <location>
        <begin position="191"/>
        <end position="195"/>
    </location>
    <ligand>
        <name>GTP</name>
        <dbReference type="ChEBI" id="CHEBI:37565"/>
    </ligand>
</feature>
<feature type="binding site" evidence="1">
    <location>
        <position position="193"/>
    </location>
    <ligand>
        <name>Mg(2+)</name>
        <dbReference type="ChEBI" id="CHEBI:18420"/>
    </ligand>
</feature>
<feature type="binding site" evidence="1">
    <location>
        <begin position="212"/>
        <end position="215"/>
    </location>
    <ligand>
        <name>GTP</name>
        <dbReference type="ChEBI" id="CHEBI:37565"/>
    </ligand>
</feature>
<feature type="binding site" evidence="1">
    <location>
        <begin position="283"/>
        <end position="286"/>
    </location>
    <ligand>
        <name>GTP</name>
        <dbReference type="ChEBI" id="CHEBI:37565"/>
    </ligand>
</feature>
<feature type="binding site" evidence="1">
    <location>
        <begin position="314"/>
        <end position="316"/>
    </location>
    <ligand>
        <name>GTP</name>
        <dbReference type="ChEBI" id="CHEBI:37565"/>
    </ligand>
</feature>
<gene>
    <name evidence="1" type="primary">obg</name>
    <name type="ordered locus">A2cp1_4333</name>
</gene>
<name>OBG_ANAD2</name>
<keyword id="KW-0963">Cytoplasm</keyword>
<keyword id="KW-0342">GTP-binding</keyword>
<keyword id="KW-0378">Hydrolase</keyword>
<keyword id="KW-0460">Magnesium</keyword>
<keyword id="KW-0479">Metal-binding</keyword>
<keyword id="KW-0547">Nucleotide-binding</keyword>
<dbReference type="EC" id="3.6.5.-" evidence="1"/>
<dbReference type="EMBL" id="CP001359">
    <property type="protein sequence ID" value="ACL67650.1"/>
    <property type="molecule type" value="Genomic_DNA"/>
</dbReference>
<dbReference type="RefSeq" id="WP_015935347.1">
    <property type="nucleotide sequence ID" value="NC_011891.1"/>
</dbReference>
<dbReference type="SMR" id="B8JBP2"/>
<dbReference type="KEGG" id="acp:A2cp1_4333"/>
<dbReference type="HOGENOM" id="CLU_011747_2_0_7"/>
<dbReference type="Proteomes" id="UP000007089">
    <property type="component" value="Chromosome"/>
</dbReference>
<dbReference type="GO" id="GO:0005737">
    <property type="term" value="C:cytoplasm"/>
    <property type="evidence" value="ECO:0007669"/>
    <property type="project" value="UniProtKB-SubCell"/>
</dbReference>
<dbReference type="GO" id="GO:0005525">
    <property type="term" value="F:GTP binding"/>
    <property type="evidence" value="ECO:0007669"/>
    <property type="project" value="UniProtKB-UniRule"/>
</dbReference>
<dbReference type="GO" id="GO:0003924">
    <property type="term" value="F:GTPase activity"/>
    <property type="evidence" value="ECO:0007669"/>
    <property type="project" value="UniProtKB-UniRule"/>
</dbReference>
<dbReference type="GO" id="GO:0000287">
    <property type="term" value="F:magnesium ion binding"/>
    <property type="evidence" value="ECO:0007669"/>
    <property type="project" value="InterPro"/>
</dbReference>
<dbReference type="GO" id="GO:0042254">
    <property type="term" value="P:ribosome biogenesis"/>
    <property type="evidence" value="ECO:0007669"/>
    <property type="project" value="UniProtKB-UniRule"/>
</dbReference>
<dbReference type="CDD" id="cd01898">
    <property type="entry name" value="Obg"/>
    <property type="match status" value="1"/>
</dbReference>
<dbReference type="FunFam" id="2.70.210.12:FF:000001">
    <property type="entry name" value="GTPase Obg"/>
    <property type="match status" value="1"/>
</dbReference>
<dbReference type="Gene3D" id="2.70.210.12">
    <property type="entry name" value="GTP1/OBG domain"/>
    <property type="match status" value="1"/>
</dbReference>
<dbReference type="Gene3D" id="3.40.50.300">
    <property type="entry name" value="P-loop containing nucleotide triphosphate hydrolases"/>
    <property type="match status" value="1"/>
</dbReference>
<dbReference type="HAMAP" id="MF_01454">
    <property type="entry name" value="GTPase_Obg"/>
    <property type="match status" value="1"/>
</dbReference>
<dbReference type="InterPro" id="IPR031167">
    <property type="entry name" value="G_OBG"/>
</dbReference>
<dbReference type="InterPro" id="IPR006073">
    <property type="entry name" value="GTP-bd"/>
</dbReference>
<dbReference type="InterPro" id="IPR014100">
    <property type="entry name" value="GTP-bd_Obg/CgtA"/>
</dbReference>
<dbReference type="InterPro" id="IPR006074">
    <property type="entry name" value="GTP1-OBG_CS"/>
</dbReference>
<dbReference type="InterPro" id="IPR006169">
    <property type="entry name" value="GTP1_OBG_dom"/>
</dbReference>
<dbReference type="InterPro" id="IPR036726">
    <property type="entry name" value="GTP1_OBG_dom_sf"/>
</dbReference>
<dbReference type="InterPro" id="IPR045086">
    <property type="entry name" value="OBG_GTPase"/>
</dbReference>
<dbReference type="InterPro" id="IPR027417">
    <property type="entry name" value="P-loop_NTPase"/>
</dbReference>
<dbReference type="NCBIfam" id="TIGR02729">
    <property type="entry name" value="Obg_CgtA"/>
    <property type="match status" value="1"/>
</dbReference>
<dbReference type="NCBIfam" id="NF008954">
    <property type="entry name" value="PRK12296.1"/>
    <property type="match status" value="1"/>
</dbReference>
<dbReference type="NCBIfam" id="NF008955">
    <property type="entry name" value="PRK12297.1"/>
    <property type="match status" value="1"/>
</dbReference>
<dbReference type="NCBIfam" id="NF008956">
    <property type="entry name" value="PRK12299.1"/>
    <property type="match status" value="1"/>
</dbReference>
<dbReference type="PANTHER" id="PTHR11702">
    <property type="entry name" value="DEVELOPMENTALLY REGULATED GTP-BINDING PROTEIN-RELATED"/>
    <property type="match status" value="1"/>
</dbReference>
<dbReference type="PANTHER" id="PTHR11702:SF31">
    <property type="entry name" value="MITOCHONDRIAL RIBOSOME-ASSOCIATED GTPASE 2"/>
    <property type="match status" value="1"/>
</dbReference>
<dbReference type="Pfam" id="PF01018">
    <property type="entry name" value="GTP1_OBG"/>
    <property type="match status" value="1"/>
</dbReference>
<dbReference type="Pfam" id="PF01926">
    <property type="entry name" value="MMR_HSR1"/>
    <property type="match status" value="1"/>
</dbReference>
<dbReference type="PIRSF" id="PIRSF002401">
    <property type="entry name" value="GTP_bd_Obg/CgtA"/>
    <property type="match status" value="1"/>
</dbReference>
<dbReference type="PRINTS" id="PR00326">
    <property type="entry name" value="GTP1OBG"/>
</dbReference>
<dbReference type="SUPFAM" id="SSF82051">
    <property type="entry name" value="Obg GTP-binding protein N-terminal domain"/>
    <property type="match status" value="1"/>
</dbReference>
<dbReference type="SUPFAM" id="SSF52540">
    <property type="entry name" value="P-loop containing nucleoside triphosphate hydrolases"/>
    <property type="match status" value="1"/>
</dbReference>
<dbReference type="PROSITE" id="PS51710">
    <property type="entry name" value="G_OBG"/>
    <property type="match status" value="1"/>
</dbReference>
<dbReference type="PROSITE" id="PS00905">
    <property type="entry name" value="GTP1_OBG"/>
    <property type="match status" value="1"/>
</dbReference>
<dbReference type="PROSITE" id="PS51883">
    <property type="entry name" value="OBG"/>
    <property type="match status" value="1"/>
</dbReference>